<feature type="chain" id="PRO_0000384219" description="Maintenance of mitochondrial morphology protein 1">
    <location>
        <begin position="1"/>
        <end position="423"/>
    </location>
</feature>
<feature type="topological domain" description="Lumenal" evidence="1">
    <location>
        <begin position="1"/>
        <end position="20"/>
    </location>
</feature>
<feature type="transmembrane region" description="Helical" evidence="1">
    <location>
        <begin position="21"/>
        <end position="41"/>
    </location>
</feature>
<feature type="topological domain" description="Cytoplasmic" evidence="1">
    <location>
        <begin position="42"/>
        <end position="423"/>
    </location>
</feature>
<feature type="domain" description="SMP-LTD" evidence="1">
    <location>
        <begin position="115"/>
        <end position="327"/>
    </location>
</feature>
<feature type="region of interest" description="Disordered" evidence="2">
    <location>
        <begin position="332"/>
        <end position="372"/>
    </location>
</feature>
<feature type="region of interest" description="Disordered" evidence="2">
    <location>
        <begin position="387"/>
        <end position="423"/>
    </location>
</feature>
<feature type="compositionally biased region" description="Basic and acidic residues" evidence="2">
    <location>
        <begin position="355"/>
        <end position="372"/>
    </location>
</feature>
<dbReference type="EMBL" id="CP009807">
    <property type="protein sequence ID" value="ATZ48183.1"/>
    <property type="molecule type" value="Genomic_DNA"/>
</dbReference>
<dbReference type="SMR" id="A6RJQ7"/>
<dbReference type="EnsemblFungi" id="Bcin03g04230.1">
    <property type="protein sequence ID" value="Bcin03p04230.1"/>
    <property type="gene ID" value="Bcin03g04230"/>
</dbReference>
<dbReference type="GeneID" id="5441192"/>
<dbReference type="KEGG" id="bfu:BCIN_03g04230"/>
<dbReference type="VEuPathDB" id="FungiDB:Bcin03g04230"/>
<dbReference type="OMA" id="WSFTQGL"/>
<dbReference type="OrthoDB" id="5599157at2759"/>
<dbReference type="Proteomes" id="UP000001798">
    <property type="component" value="Chromosome bcin03"/>
</dbReference>
<dbReference type="GO" id="GO:0005789">
    <property type="term" value="C:endoplasmic reticulum membrane"/>
    <property type="evidence" value="ECO:0007669"/>
    <property type="project" value="UniProtKB-SubCell"/>
</dbReference>
<dbReference type="GO" id="GO:0032865">
    <property type="term" value="C:ERMES complex"/>
    <property type="evidence" value="ECO:0007669"/>
    <property type="project" value="UniProtKB-UniRule"/>
</dbReference>
<dbReference type="GO" id="GO:0008289">
    <property type="term" value="F:lipid binding"/>
    <property type="evidence" value="ECO:0007669"/>
    <property type="project" value="UniProtKB-KW"/>
</dbReference>
<dbReference type="GO" id="GO:0120013">
    <property type="term" value="F:lipid transfer activity"/>
    <property type="evidence" value="ECO:0007669"/>
    <property type="project" value="EnsemblFungi"/>
</dbReference>
<dbReference type="GO" id="GO:0015917">
    <property type="term" value="P:aminophospholipid transport"/>
    <property type="evidence" value="ECO:0007669"/>
    <property type="project" value="EnsemblFungi"/>
</dbReference>
<dbReference type="GO" id="GO:0000002">
    <property type="term" value="P:mitochondrial genome maintenance"/>
    <property type="evidence" value="ECO:0007669"/>
    <property type="project" value="UniProtKB-UniRule"/>
</dbReference>
<dbReference type="GO" id="GO:0070096">
    <property type="term" value="P:mitochondrial outer membrane translocase complex assembly"/>
    <property type="evidence" value="ECO:0007669"/>
    <property type="project" value="EnsemblFungi"/>
</dbReference>
<dbReference type="GO" id="GO:1990456">
    <property type="term" value="P:mitochondrion-endoplasmic reticulum membrane tethering"/>
    <property type="evidence" value="ECO:0007669"/>
    <property type="project" value="EnsemblFungi"/>
</dbReference>
<dbReference type="GO" id="GO:0045040">
    <property type="term" value="P:protein insertion into mitochondrial outer membrane"/>
    <property type="evidence" value="ECO:0007669"/>
    <property type="project" value="UniProtKB-UniRule"/>
</dbReference>
<dbReference type="CDD" id="cd21671">
    <property type="entry name" value="SMP_Mmm1"/>
    <property type="match status" value="1"/>
</dbReference>
<dbReference type="HAMAP" id="MF_03103">
    <property type="entry name" value="Mmm1"/>
    <property type="match status" value="1"/>
</dbReference>
<dbReference type="InterPro" id="IPR027537">
    <property type="entry name" value="Mmm1"/>
</dbReference>
<dbReference type="InterPro" id="IPR019411">
    <property type="entry name" value="MMM1_dom"/>
</dbReference>
<dbReference type="InterPro" id="IPR031468">
    <property type="entry name" value="SMP_LBD"/>
</dbReference>
<dbReference type="PANTHER" id="PTHR13466:SF0">
    <property type="entry name" value="SMP-LTD DOMAIN-CONTAINING PROTEIN"/>
    <property type="match status" value="1"/>
</dbReference>
<dbReference type="PANTHER" id="PTHR13466">
    <property type="entry name" value="TEX2 PROTEIN-RELATED"/>
    <property type="match status" value="1"/>
</dbReference>
<dbReference type="Pfam" id="PF10296">
    <property type="entry name" value="MMM1"/>
    <property type="match status" value="1"/>
</dbReference>
<dbReference type="PROSITE" id="PS51847">
    <property type="entry name" value="SMP"/>
    <property type="match status" value="1"/>
</dbReference>
<proteinExistence type="inferred from homology"/>
<name>MMM1_BOTFB</name>
<reference key="1">
    <citation type="journal article" date="2011" name="PLoS Genet.">
        <title>Genomic analysis of the necrotrophic fungal pathogens Sclerotinia sclerotiorum and Botrytis cinerea.</title>
        <authorList>
            <person name="Amselem J."/>
            <person name="Cuomo C.A."/>
            <person name="van Kan J.A.L."/>
            <person name="Viaud M."/>
            <person name="Benito E.P."/>
            <person name="Couloux A."/>
            <person name="Coutinho P.M."/>
            <person name="de Vries R.P."/>
            <person name="Dyer P.S."/>
            <person name="Fillinger S."/>
            <person name="Fournier E."/>
            <person name="Gout L."/>
            <person name="Hahn M."/>
            <person name="Kohn L."/>
            <person name="Lapalu N."/>
            <person name="Plummer K.M."/>
            <person name="Pradier J.-M."/>
            <person name="Quevillon E."/>
            <person name="Sharon A."/>
            <person name="Simon A."/>
            <person name="ten Have A."/>
            <person name="Tudzynski B."/>
            <person name="Tudzynski P."/>
            <person name="Wincker P."/>
            <person name="Andrew M."/>
            <person name="Anthouard V."/>
            <person name="Beever R.E."/>
            <person name="Beffa R."/>
            <person name="Benoit I."/>
            <person name="Bouzid O."/>
            <person name="Brault B."/>
            <person name="Chen Z."/>
            <person name="Choquer M."/>
            <person name="Collemare J."/>
            <person name="Cotton P."/>
            <person name="Danchin E.G."/>
            <person name="Da Silva C."/>
            <person name="Gautier A."/>
            <person name="Giraud C."/>
            <person name="Giraud T."/>
            <person name="Gonzalez C."/>
            <person name="Grossetete S."/>
            <person name="Gueldener U."/>
            <person name="Henrissat B."/>
            <person name="Howlett B.J."/>
            <person name="Kodira C."/>
            <person name="Kretschmer M."/>
            <person name="Lappartient A."/>
            <person name="Leroch M."/>
            <person name="Levis C."/>
            <person name="Mauceli E."/>
            <person name="Neuveglise C."/>
            <person name="Oeser B."/>
            <person name="Pearson M."/>
            <person name="Poulain J."/>
            <person name="Poussereau N."/>
            <person name="Quesneville H."/>
            <person name="Rascle C."/>
            <person name="Schumacher J."/>
            <person name="Segurens B."/>
            <person name="Sexton A."/>
            <person name="Silva E."/>
            <person name="Sirven C."/>
            <person name="Soanes D.M."/>
            <person name="Talbot N.J."/>
            <person name="Templeton M."/>
            <person name="Yandava C."/>
            <person name="Yarden O."/>
            <person name="Zeng Q."/>
            <person name="Rollins J.A."/>
            <person name="Lebrun M.-H."/>
            <person name="Dickman M."/>
        </authorList>
    </citation>
    <scope>NUCLEOTIDE SEQUENCE [LARGE SCALE GENOMIC DNA]</scope>
    <source>
        <strain>B05.10</strain>
    </source>
</reference>
<reference key="2">
    <citation type="journal article" date="2012" name="Eukaryot. Cell">
        <title>Genome update of Botrytis cinerea strains B05.10 and T4.</title>
        <authorList>
            <person name="Staats M."/>
            <person name="van Kan J.A.L."/>
        </authorList>
    </citation>
    <scope>NUCLEOTIDE SEQUENCE [LARGE SCALE GENOMIC DNA]</scope>
    <scope>GENOME REANNOTATION</scope>
    <source>
        <strain>B05.10</strain>
    </source>
</reference>
<reference key="3">
    <citation type="journal article" date="2017" name="Mol. Plant Pathol.">
        <title>A gapless genome sequence of the fungus Botrytis cinerea.</title>
        <authorList>
            <person name="van Kan J.A.L."/>
            <person name="Stassen J.H.M."/>
            <person name="Mosbach A."/>
            <person name="van der Lee T.A.J."/>
            <person name="Faino L."/>
            <person name="Farmer A.D."/>
            <person name="Papasotiriou D.G."/>
            <person name="Zhou S."/>
            <person name="Seidl M.F."/>
            <person name="Cottam E."/>
            <person name="Edel D."/>
            <person name="Hahn M."/>
            <person name="Schwartz D.C."/>
            <person name="Dietrich R.A."/>
            <person name="Widdison S."/>
            <person name="Scalliet G."/>
        </authorList>
    </citation>
    <scope>NUCLEOTIDE SEQUENCE [LARGE SCALE GENOMIC DNA]</scope>
    <scope>GENOME REANNOTATION</scope>
    <source>
        <strain>B05.10</strain>
    </source>
</reference>
<evidence type="ECO:0000255" key="1">
    <source>
        <dbReference type="HAMAP-Rule" id="MF_03103"/>
    </source>
</evidence>
<evidence type="ECO:0000256" key="2">
    <source>
        <dbReference type="SAM" id="MobiDB-lite"/>
    </source>
</evidence>
<protein>
    <recommendedName>
        <fullName evidence="1">Maintenance of mitochondrial morphology protein 1</fullName>
    </recommendedName>
</protein>
<comment type="function">
    <text evidence="1">Component of the ERMES/MDM complex, which serves as a molecular tether to connect the endoplasmic reticulum (ER) and mitochondria. Components of this complex are involved in the control of mitochondrial shape and protein biogenesis, and function in nonvesicular lipid trafficking between the ER and mitochondria. The MDM12-MMM1 subcomplex functions in the major beta-barrel assembly pathway that is responsible for biogenesis of all outer membrane beta-barrel proteins, and acts in a late step after the SAM complex. The MDM10-MDM12-MMM1 subcomplex further acts in the TOM40-specific pathway after the action of the MDM12-MMM1 complex. Essential for establishing and maintaining the structure of mitochondria and maintenance of mtDNA nucleoids.</text>
</comment>
<comment type="subunit">
    <text evidence="1">Homodimer. Component of the ER-mitochondria encounter structure (ERMES) or MDM complex, composed of MMM1, MDM10, MDM12 and MDM34. A MMM1 homodimer associates with one molecule of MDM12 on each side in a pairwise head-to-tail manner, and the SMP-LTD domains of MMM1 and MDM12 generate a continuous hydrophobic tunnel for phospholipid trafficking.</text>
</comment>
<comment type="subcellular location">
    <subcellularLocation>
        <location evidence="1">Endoplasmic reticulum membrane</location>
        <topology evidence="1">Single-pass type I membrane protein</topology>
    </subcellularLocation>
    <text evidence="1">The ERMES/MDM complex localizes to a few discrete foci (around 10 per single cell), that represent mitochondria-endoplasmic reticulum junctions. These foci are often found next to mtDNA nucleoids.</text>
</comment>
<comment type="domain">
    <text evidence="1">The SMP-LTD domain is a barrel-like domain that can bind various types of glycerophospholipids in its interior and mediate their transfer between two adjacent bilayers.</text>
</comment>
<comment type="similarity">
    <text evidence="1">Belongs to the MMM1 family.</text>
</comment>
<organism>
    <name type="scientific">Botryotinia fuckeliana (strain B05.10)</name>
    <name type="common">Noble rot fungus</name>
    <name type="synonym">Botrytis cinerea</name>
    <dbReference type="NCBI Taxonomy" id="332648"/>
    <lineage>
        <taxon>Eukaryota</taxon>
        <taxon>Fungi</taxon>
        <taxon>Dikarya</taxon>
        <taxon>Ascomycota</taxon>
        <taxon>Pezizomycotina</taxon>
        <taxon>Leotiomycetes</taxon>
        <taxon>Helotiales</taxon>
        <taxon>Sclerotiniaceae</taxon>
        <taxon>Botrytis</taxon>
    </lineage>
</organism>
<keyword id="KW-0256">Endoplasmic reticulum</keyword>
<keyword id="KW-0445">Lipid transport</keyword>
<keyword id="KW-0446">Lipid-binding</keyword>
<keyword id="KW-0472">Membrane</keyword>
<keyword id="KW-1185">Reference proteome</keyword>
<keyword id="KW-0812">Transmembrane</keyword>
<keyword id="KW-1133">Transmembrane helix</keyword>
<keyword id="KW-0813">Transport</keyword>
<sequence length="423" mass="46664">MTIPAPIPDKAESSLSFTQGLLLGQLSIVILIGAFIKFFIFGDPPSPDVTAALRATERRSRTLAHKRSLLTLRSSTPRRASQPLNRKRSSVLRNPAPLTTNAILSKTYYNVDSHQPESLDWFNVLIAQTIAQFRADAQHDDAILTSLTKVLNGGNRPDFLDEIKVTELSLGEDFPIFSNCRVIPVDEDGMTLGREGGAAGREHGRLQARMDVDLSDFITLAVETKLLLNYPKPLVAVLPVALAVSVVRFSGTLSISFVPGSPLNGSPTTLAFCFLDDYRLDLSIRSLVGSRSRLQDVPKIAQLIEARLHTWFDERCVEPRFQQIELPSLWPRKKNTRGGEDLDTGSDAGGIGRARSRDVERDLREEARKEVEAETGIRVGRSKLGVSLDVPDEGSEDGLRFRRKSKGRDEYAMPGSMPGLSMT</sequence>
<accession>A6RJQ7</accession>
<accession>A0A384JCA7</accession>
<gene>
    <name evidence="1" type="primary">MMM1</name>
    <name type="ORF">BC1G_00678</name>
    <name type="ORF">BCIN_03g04230</name>
</gene>